<organism evidence="9">
    <name type="scientific">Drosophila melanogaster</name>
    <name type="common">Fruit fly</name>
    <dbReference type="NCBI Taxonomy" id="7227"/>
    <lineage>
        <taxon>Eukaryota</taxon>
        <taxon>Metazoa</taxon>
        <taxon>Ecdysozoa</taxon>
        <taxon>Arthropoda</taxon>
        <taxon>Hexapoda</taxon>
        <taxon>Insecta</taxon>
        <taxon>Pterygota</taxon>
        <taxon>Neoptera</taxon>
        <taxon>Endopterygota</taxon>
        <taxon>Diptera</taxon>
        <taxon>Brachycera</taxon>
        <taxon>Muscomorpha</taxon>
        <taxon>Ephydroidea</taxon>
        <taxon>Drosophilidae</taxon>
        <taxon>Drosophila</taxon>
        <taxon>Sophophora</taxon>
    </lineage>
</organism>
<keyword id="KW-0539">Nucleus</keyword>
<keyword id="KW-1185">Reference proteome</keyword>
<keyword id="KW-0804">Transcription</keyword>
<keyword id="KW-0805">Transcription regulation</keyword>
<protein>
    <recommendedName>
        <fullName evidence="8">Transcriptional adapter 1-1</fullName>
    </recommendedName>
</protein>
<sequence>MLTDRVLATKEALVVALGDNWERYRANMKNWFRSRWTKEEFDAESRKILTPDKLHLHNQFLLALLNKIDAFAPLENPPAVQTSSSSGNRSKRRKRSCRTFAERLNFELSDVLDFVAEDNMQIIRPPTTIGIPSDQQQQQLQSQRYCAQELFLPDAGFIMGRFLIGAWEIGLVSVDDNVAEYVAMAVQVLLKDLLSAIIKKRKHYKTSGEGNFYYDVGAPLRDPSLRNTVTRQKVDDTPLELDKELNTANFMRRQNDDVTFLSACEEVQPTERTVITLKDCQLALRDRNLIGSHAVYSINMERLNMMMH</sequence>
<reference evidence="9" key="1">
    <citation type="journal article" date="2000" name="Science">
        <title>The genome sequence of Drosophila melanogaster.</title>
        <authorList>
            <person name="Adams M.D."/>
            <person name="Celniker S.E."/>
            <person name="Holt R.A."/>
            <person name="Evans C.A."/>
            <person name="Gocayne J.D."/>
            <person name="Amanatides P.G."/>
            <person name="Scherer S.E."/>
            <person name="Li P.W."/>
            <person name="Hoskins R.A."/>
            <person name="Galle R.F."/>
            <person name="George R.A."/>
            <person name="Lewis S.E."/>
            <person name="Richards S."/>
            <person name="Ashburner M."/>
            <person name="Henderson S.N."/>
            <person name="Sutton G.G."/>
            <person name="Wortman J.R."/>
            <person name="Yandell M.D."/>
            <person name="Zhang Q."/>
            <person name="Chen L.X."/>
            <person name="Brandon R.C."/>
            <person name="Rogers Y.-H.C."/>
            <person name="Blazej R.G."/>
            <person name="Champe M."/>
            <person name="Pfeiffer B.D."/>
            <person name="Wan K.H."/>
            <person name="Doyle C."/>
            <person name="Baxter E.G."/>
            <person name="Helt G."/>
            <person name="Nelson C.R."/>
            <person name="Miklos G.L.G."/>
            <person name="Abril J.F."/>
            <person name="Agbayani A."/>
            <person name="An H.-J."/>
            <person name="Andrews-Pfannkoch C."/>
            <person name="Baldwin D."/>
            <person name="Ballew R.M."/>
            <person name="Basu A."/>
            <person name="Baxendale J."/>
            <person name="Bayraktaroglu L."/>
            <person name="Beasley E.M."/>
            <person name="Beeson K.Y."/>
            <person name="Benos P.V."/>
            <person name="Berman B.P."/>
            <person name="Bhandari D."/>
            <person name="Bolshakov S."/>
            <person name="Borkova D."/>
            <person name="Botchan M.R."/>
            <person name="Bouck J."/>
            <person name="Brokstein P."/>
            <person name="Brottier P."/>
            <person name="Burtis K.C."/>
            <person name="Busam D.A."/>
            <person name="Butler H."/>
            <person name="Cadieu E."/>
            <person name="Center A."/>
            <person name="Chandra I."/>
            <person name="Cherry J.M."/>
            <person name="Cawley S."/>
            <person name="Dahlke C."/>
            <person name="Davenport L.B."/>
            <person name="Davies P."/>
            <person name="de Pablos B."/>
            <person name="Delcher A."/>
            <person name="Deng Z."/>
            <person name="Mays A.D."/>
            <person name="Dew I."/>
            <person name="Dietz S.M."/>
            <person name="Dodson K."/>
            <person name="Doup L.E."/>
            <person name="Downes M."/>
            <person name="Dugan-Rocha S."/>
            <person name="Dunkov B.C."/>
            <person name="Dunn P."/>
            <person name="Durbin K.J."/>
            <person name="Evangelista C.C."/>
            <person name="Ferraz C."/>
            <person name="Ferriera S."/>
            <person name="Fleischmann W."/>
            <person name="Fosler C."/>
            <person name="Gabrielian A.E."/>
            <person name="Garg N.S."/>
            <person name="Gelbart W.M."/>
            <person name="Glasser K."/>
            <person name="Glodek A."/>
            <person name="Gong F."/>
            <person name="Gorrell J.H."/>
            <person name="Gu Z."/>
            <person name="Guan P."/>
            <person name="Harris M."/>
            <person name="Harris N.L."/>
            <person name="Harvey D.A."/>
            <person name="Heiman T.J."/>
            <person name="Hernandez J.R."/>
            <person name="Houck J."/>
            <person name="Hostin D."/>
            <person name="Houston K.A."/>
            <person name="Howland T.J."/>
            <person name="Wei M.-H."/>
            <person name="Ibegwam C."/>
            <person name="Jalali M."/>
            <person name="Kalush F."/>
            <person name="Karpen G.H."/>
            <person name="Ke Z."/>
            <person name="Kennison J.A."/>
            <person name="Ketchum K.A."/>
            <person name="Kimmel B.E."/>
            <person name="Kodira C.D."/>
            <person name="Kraft C.L."/>
            <person name="Kravitz S."/>
            <person name="Kulp D."/>
            <person name="Lai Z."/>
            <person name="Lasko P."/>
            <person name="Lei Y."/>
            <person name="Levitsky A.A."/>
            <person name="Li J.H."/>
            <person name="Li Z."/>
            <person name="Liang Y."/>
            <person name="Lin X."/>
            <person name="Liu X."/>
            <person name="Mattei B."/>
            <person name="McIntosh T.C."/>
            <person name="McLeod M.P."/>
            <person name="McPherson D."/>
            <person name="Merkulov G."/>
            <person name="Milshina N.V."/>
            <person name="Mobarry C."/>
            <person name="Morris J."/>
            <person name="Moshrefi A."/>
            <person name="Mount S.M."/>
            <person name="Moy M."/>
            <person name="Murphy B."/>
            <person name="Murphy L."/>
            <person name="Muzny D.M."/>
            <person name="Nelson D.L."/>
            <person name="Nelson D.R."/>
            <person name="Nelson K.A."/>
            <person name="Nixon K."/>
            <person name="Nusskern D.R."/>
            <person name="Pacleb J.M."/>
            <person name="Palazzolo M."/>
            <person name="Pittman G.S."/>
            <person name="Pan S."/>
            <person name="Pollard J."/>
            <person name="Puri V."/>
            <person name="Reese M.G."/>
            <person name="Reinert K."/>
            <person name="Remington K."/>
            <person name="Saunders R.D.C."/>
            <person name="Scheeler F."/>
            <person name="Shen H."/>
            <person name="Shue B.C."/>
            <person name="Siden-Kiamos I."/>
            <person name="Simpson M."/>
            <person name="Skupski M.P."/>
            <person name="Smith T.J."/>
            <person name="Spier E."/>
            <person name="Spradling A.C."/>
            <person name="Stapleton M."/>
            <person name="Strong R."/>
            <person name="Sun E."/>
            <person name="Svirskas R."/>
            <person name="Tector C."/>
            <person name="Turner R."/>
            <person name="Venter E."/>
            <person name="Wang A.H."/>
            <person name="Wang X."/>
            <person name="Wang Z.-Y."/>
            <person name="Wassarman D.A."/>
            <person name="Weinstock G.M."/>
            <person name="Weissenbach J."/>
            <person name="Williams S.M."/>
            <person name="Woodage T."/>
            <person name="Worley K.C."/>
            <person name="Wu D."/>
            <person name="Yang S."/>
            <person name="Yao Q.A."/>
            <person name="Ye J."/>
            <person name="Yeh R.-F."/>
            <person name="Zaveri J.S."/>
            <person name="Zhan M."/>
            <person name="Zhang G."/>
            <person name="Zhao Q."/>
            <person name="Zheng L."/>
            <person name="Zheng X.H."/>
            <person name="Zhong F.N."/>
            <person name="Zhong W."/>
            <person name="Zhou X."/>
            <person name="Zhu S.C."/>
            <person name="Zhu X."/>
            <person name="Smith H.O."/>
            <person name="Gibbs R.A."/>
            <person name="Myers E.W."/>
            <person name="Rubin G.M."/>
            <person name="Venter J.C."/>
        </authorList>
    </citation>
    <scope>NUCLEOTIDE SEQUENCE [LARGE SCALE GENOMIC DNA]</scope>
    <source>
        <strain evidence="9">Berkeley</strain>
    </source>
</reference>
<reference evidence="9" key="2">
    <citation type="journal article" date="2002" name="Genome Biol.">
        <title>Annotation of the Drosophila melanogaster euchromatic genome: a systematic review.</title>
        <authorList>
            <person name="Misra S."/>
            <person name="Crosby M.A."/>
            <person name="Mungall C.J."/>
            <person name="Matthews B.B."/>
            <person name="Campbell K.S."/>
            <person name="Hradecky P."/>
            <person name="Huang Y."/>
            <person name="Kaminker J.S."/>
            <person name="Millburn G.H."/>
            <person name="Prochnik S.E."/>
            <person name="Smith C.D."/>
            <person name="Tupy J.L."/>
            <person name="Whitfield E.J."/>
            <person name="Bayraktaroglu L."/>
            <person name="Berman B.P."/>
            <person name="Bettencourt B.R."/>
            <person name="Celniker S.E."/>
            <person name="de Grey A.D.N.J."/>
            <person name="Drysdale R.A."/>
            <person name="Harris N.L."/>
            <person name="Richter J."/>
            <person name="Russo S."/>
            <person name="Schroeder A.J."/>
            <person name="Shu S.Q."/>
            <person name="Stapleton M."/>
            <person name="Yamada C."/>
            <person name="Ashburner M."/>
            <person name="Gelbart W.M."/>
            <person name="Rubin G.M."/>
            <person name="Lewis S.E."/>
        </authorList>
    </citation>
    <scope>GENOME REANNOTATION</scope>
    <source>
        <strain evidence="9">Berkeley</strain>
    </source>
</reference>
<reference evidence="6" key="3">
    <citation type="journal article" date="2006" name="Mol. Cell. Biol.">
        <title>The essential gene wda encodes a WD40 repeat subunit of Drosophila SAGA required for histone H3 acetylation.</title>
        <authorList>
            <person name="Guelman S."/>
            <person name="Suganuma T."/>
            <person name="Florens L."/>
            <person name="Weake V."/>
            <person name="Swanson S.K."/>
            <person name="Washburn M.P."/>
            <person name="Abmayr S.M."/>
            <person name="Workman J.L."/>
        </authorList>
    </citation>
    <scope>FUNCTION</scope>
    <scope>IDENTIFICATION IN SAGA COMPLEX</scope>
    <scope>INTERACTION WITH GCN5; SPT3 AND ADA2B</scope>
    <scope>IDENTIFICATION BY MASS SPECTROMETRY</scope>
</reference>
<reference evidence="6" key="4">
    <citation type="journal article" date="2011" name="Genes Dev.">
        <title>Post-transcription initiation function of the ubiquitous SAGA complex in tissue-specific gene activation.</title>
        <authorList>
            <person name="Weake V.M."/>
            <person name="Dyer J.O."/>
            <person name="Seidel C."/>
            <person name="Box A."/>
            <person name="Swanson S.K."/>
            <person name="Peak A."/>
            <person name="Florens L."/>
            <person name="Washburn M.P."/>
            <person name="Abmayr S.M."/>
            <person name="Workman J.L."/>
        </authorList>
    </citation>
    <scope>FUNCTION</scope>
    <scope>IDENTIFICATION IN SAGA COMPLEX</scope>
    <scope>DEVELOPMENTAL STAGE</scope>
    <scope>IDENTIFICATION BY MASS SPECTROMETRY</scope>
</reference>
<reference evidence="6" key="5">
    <citation type="journal article" date="2014" name="Genes Dev.">
        <title>Loss of Drosophila Ataxin-7, a SAGA subunit, reduces H2B ubiquitination and leads to neural and retinal degeneration.</title>
        <authorList>
            <person name="Mohan R.D."/>
            <person name="Dialynas G."/>
            <person name="Weake V.M."/>
            <person name="Liu J."/>
            <person name="Martin-Brown S."/>
            <person name="Florens L."/>
            <person name="Washburn M.P."/>
            <person name="Workman J.L."/>
            <person name="Abmayr S.M."/>
        </authorList>
    </citation>
    <scope>FUNCTION</scope>
    <scope>IDENTIFICATION IN THE SAGA COMPLEX</scope>
    <scope>SUBCELLULAR LOCATION</scope>
    <scope>IDENTIFICATION BY MASS SPECTROMETRY</scope>
</reference>
<reference evidence="6" key="6">
    <citation type="journal article" date="2019" name="J. Cell Sci.">
        <title>The Drosophila Dbf4 ortholog Chiffon forms a complex with Gcn5 that is necessary for histone acetylation and viability.</title>
        <authorList>
            <person name="Torres-Zelada E.F."/>
            <person name="Stephenson R.E."/>
            <person name="Alpsoy A."/>
            <person name="Anderson B.D."/>
            <person name="Swanson S.K."/>
            <person name="Florens L."/>
            <person name="Dykhuizen E.C."/>
            <person name="Washburn M.P."/>
            <person name="Weake V.M."/>
        </authorList>
    </citation>
    <scope>FUNCTION</scope>
    <scope>IDENTIFICATION IN THE SAGA COMPLEX</scope>
    <scope>IDENTIFICATION BY MASS SPECTROMETRY</scope>
</reference>
<accession>Q8IP99</accession>
<proteinExistence type="evidence at protein level"/>
<name>TAD11_DROME</name>
<gene>
    <name evidence="8" type="primary">Ada1-1</name>
    <name evidence="5" type="synonym">Ada1</name>
    <name evidence="8" type="ORF">CG31865</name>
</gene>
<feature type="chain" id="PRO_0000462580" description="Transcriptional adapter 1-1">
    <location>
        <begin position="1"/>
        <end position="308"/>
    </location>
</feature>
<evidence type="ECO:0000269" key="1">
    <source>
    </source>
</evidence>
<evidence type="ECO:0000269" key="2">
    <source>
    </source>
</evidence>
<evidence type="ECO:0000269" key="3">
    <source>
    </source>
</evidence>
<evidence type="ECO:0000269" key="4">
    <source>
    </source>
</evidence>
<evidence type="ECO:0000303" key="5">
    <source>
    </source>
</evidence>
<evidence type="ECO:0000305" key="6"/>
<evidence type="ECO:0000305" key="7">
    <source>
    </source>
</evidence>
<evidence type="ECO:0000312" key="8">
    <source>
        <dbReference type="FlyBase" id="FBgn0051865"/>
    </source>
</evidence>
<evidence type="ECO:0000312" key="9">
    <source>
        <dbReference type="Proteomes" id="UP000000803"/>
    </source>
</evidence>
<dbReference type="EMBL" id="AE014134">
    <property type="protein sequence ID" value="AAN10796.1"/>
    <property type="molecule type" value="Genomic_DNA"/>
</dbReference>
<dbReference type="EMBL" id="AE014134">
    <property type="protein sequence ID" value="AHN54372.1"/>
    <property type="molecule type" value="Genomic_DNA"/>
</dbReference>
<dbReference type="RefSeq" id="NP_001285858.1">
    <property type="nucleotide sequence ID" value="NM_001298929.1"/>
</dbReference>
<dbReference type="RefSeq" id="NP_723707.1">
    <property type="nucleotide sequence ID" value="NM_164984.3"/>
</dbReference>
<dbReference type="ComplexPortal" id="CPX-2644">
    <property type="entry name" value="SAGA complex"/>
</dbReference>
<dbReference type="FunCoup" id="Q8IP99">
    <property type="interactions" value="1340"/>
</dbReference>
<dbReference type="STRING" id="7227.FBpp0079873"/>
<dbReference type="PaxDb" id="7227-FBpp0079873"/>
<dbReference type="DNASU" id="318991"/>
<dbReference type="EnsemblMetazoa" id="FBtr0080289">
    <property type="protein sequence ID" value="FBpp0079873"/>
    <property type="gene ID" value="FBgn0051865"/>
</dbReference>
<dbReference type="EnsemblMetazoa" id="FBtr0345286">
    <property type="protein sequence ID" value="FBpp0311453"/>
    <property type="gene ID" value="FBgn0051865"/>
</dbReference>
<dbReference type="GeneID" id="318991"/>
<dbReference type="KEGG" id="dme:Dmel_CG31865"/>
<dbReference type="UCSC" id="CG31865-RA">
    <property type="organism name" value="d. melanogaster"/>
</dbReference>
<dbReference type="AGR" id="FB:FBgn0051865"/>
<dbReference type="CTD" id="318991"/>
<dbReference type="FlyBase" id="FBgn0051865">
    <property type="gene designation" value="Ada1-1"/>
</dbReference>
<dbReference type="VEuPathDB" id="VectorBase:FBgn0051865"/>
<dbReference type="eggNOG" id="ENOG502QRMT">
    <property type="taxonomic scope" value="Eukaryota"/>
</dbReference>
<dbReference type="GeneTree" id="ENSGT00390000011644"/>
<dbReference type="HOGENOM" id="CLU_071612_0_0_1"/>
<dbReference type="InParanoid" id="Q8IP99"/>
<dbReference type="OMA" id="KLWFRKK"/>
<dbReference type="OrthoDB" id="10264870at2759"/>
<dbReference type="BioGRID-ORCS" id="318991">
    <property type="hits" value="0 hits in 1 CRISPR screen"/>
</dbReference>
<dbReference type="Proteomes" id="UP000000803">
    <property type="component" value="Chromosome 2L"/>
</dbReference>
<dbReference type="Bgee" id="FBgn0051865">
    <property type="expression patterns" value="Expressed in T neuron T5c (Drosophila) in embryonic/larval optic lobe (Drosophila) and 18 other cell types or tissues"/>
</dbReference>
<dbReference type="GO" id="GO:0005634">
    <property type="term" value="C:nucleus"/>
    <property type="evidence" value="ECO:0000314"/>
    <property type="project" value="FlyBase"/>
</dbReference>
<dbReference type="GO" id="GO:0000124">
    <property type="term" value="C:SAGA complex"/>
    <property type="evidence" value="ECO:0000314"/>
    <property type="project" value="FlyBase"/>
</dbReference>
<dbReference type="GO" id="GO:0003713">
    <property type="term" value="F:transcription coactivator activity"/>
    <property type="evidence" value="ECO:0000250"/>
    <property type="project" value="FlyBase"/>
</dbReference>
<dbReference type="GO" id="GO:0006357">
    <property type="term" value="P:regulation of transcription by RNA polymerase II"/>
    <property type="evidence" value="ECO:0000318"/>
    <property type="project" value="GO_Central"/>
</dbReference>
<dbReference type="CDD" id="cd22934">
    <property type="entry name" value="HFD_TADA1"/>
    <property type="match status" value="1"/>
</dbReference>
<dbReference type="InterPro" id="IPR024738">
    <property type="entry name" value="Hfi1/Tada1"/>
</dbReference>
<dbReference type="PANTHER" id="PTHR21277">
    <property type="entry name" value="TRANSCRIPTIONAL ADAPTER 1"/>
    <property type="match status" value="1"/>
</dbReference>
<dbReference type="PANTHER" id="PTHR21277:SF5">
    <property type="entry name" value="TRANSCRIPTIONAL ADAPTER 1"/>
    <property type="match status" value="1"/>
</dbReference>
<dbReference type="Pfam" id="PF12767">
    <property type="entry name" value="SAGA-Tad1"/>
    <property type="match status" value="1"/>
</dbReference>
<comment type="function">
    <text evidence="1 2 3 4">Component of the transcription regulatory complex SAGA, a multiprotein complex that activates transcription by remodeling chromatin and mediating histone acetylation and deubiquitination (PubMed:16980620, PubMed:21764853, PubMed:24493646, PubMed:30559249). The SAGA complex predominantly acetylates histone H3 (PubMed:30559249).</text>
</comment>
<comment type="subunit">
    <text evidence="1 2 3 4 7">Component of the Spt-Ada-Gcn5 acetyltransferase (SAGA) complex consisting of wda/Taf5L, Saf6, Taf9, Taf10b, Taf12, Ada1, Spt3, Spt7, Spt20, Sf3b3, Sf3b5, Nipped-A/Tra1, a histone acetyltransferase (HAT) module made up of Gcn5, Ada2b (Isoform B), Ada3 and Sgf29, and a deubiquitinase (DUB) module made up of not/nonstop, Sgf11 and e(y)2 tethered to SAGA by Atxn7 (Probable) (PubMed:21764853, PubMed:24493646, PubMed:30559249). Not a component of the Ada2a-containing ATAC complex (PubMed:16980620).</text>
</comment>
<comment type="subcellular location">
    <subcellularLocation>
        <location evidence="3">Nucleus</location>
    </subcellularLocation>
</comment>
<comment type="developmental stage">
    <text evidence="2">Expressed in embryonic muscle and neuronal cells (at protein level).</text>
</comment>
<comment type="miscellaneous">
    <text evidence="6">One of a pair of almost identical proteins differing at a single amino acid position expressed from genes (Ada1-1 and Ada1-2) resulting from a gene duplication.</text>
</comment>
<comment type="similarity">
    <text evidence="6">Belongs to the TADA1 family.</text>
</comment>